<gene>
    <name evidence="12" type="primary">Nostrin</name>
</gene>
<comment type="function">
    <text evidence="1">Multivalent adapter protein which may decrease NOS3 activity by inducing its translocation away from the plasma membrane.</text>
</comment>
<comment type="subunit">
    <text evidence="1 10">Homotrimer. Interacts with DAB2. Interacts with NOS3, WASL and CAV1 (By similarity). Interacts (via SH3 domain) with DNM2; this interaction allows the recruitment of NOS3 to dynamin-positive structures (PubMed:16234328).</text>
</comment>
<comment type="subcellular location">
    <subcellularLocation>
        <location evidence="3">Cell membrane</location>
        <topology evidence="3">Peripheral membrane protein</topology>
        <orientation evidence="3">Cytoplasmic side</orientation>
    </subcellularLocation>
    <subcellularLocation>
        <location evidence="3">Cytoplasmic vesicle</location>
    </subcellularLocation>
    <subcellularLocation>
        <location evidence="3">Cytoplasm</location>
        <location evidence="3">Cytoskeleton</location>
    </subcellularLocation>
    <subcellularLocation>
        <location evidence="2">Cytoplasm</location>
    </subcellularLocation>
    <subcellularLocation>
        <location evidence="2">Nucleus</location>
    </subcellularLocation>
    <text evidence="3">Enriched in selected actin structures.</text>
</comment>
<comment type="tissue specificity">
    <text evidence="9">Over-expressed in brain microcapillaries from spontaneously hypertensive rats.</text>
</comment>
<comment type="domain">
    <text evidence="1">The SH3 domain mediates interaction with NOS3, DNM2 and WASL.</text>
</comment>
<comment type="domain">
    <text evidence="1">The F-BAR domain is necessary for membrane targeting.</text>
</comment>
<proteinExistence type="evidence at protein level"/>
<dbReference type="EMBL" id="BC088446">
    <property type="protein sequence ID" value="AAH88446.1"/>
    <property type="molecule type" value="mRNA"/>
</dbReference>
<dbReference type="EMBL" id="AY032855">
    <property type="protein sequence ID" value="AAK64518.1"/>
    <property type="molecule type" value="mRNA"/>
</dbReference>
<dbReference type="RefSeq" id="NP_001019431.1">
    <property type="nucleotide sequence ID" value="NM_001024260.1"/>
</dbReference>
<dbReference type="SMR" id="Q5I0D6"/>
<dbReference type="FunCoup" id="Q5I0D6">
    <property type="interactions" value="168"/>
</dbReference>
<dbReference type="STRING" id="10116.ENSRNOP00000062066"/>
<dbReference type="iPTMnet" id="Q5I0D6"/>
<dbReference type="PhosphoSitePlus" id="Q5I0D6"/>
<dbReference type="PaxDb" id="10116-ENSRNOP00000062066"/>
<dbReference type="Ensembl" id="ENSRNOT00000067161.4">
    <property type="protein sequence ID" value="ENSRNOP00000062066.2"/>
    <property type="gene ID" value="ENSRNOG00000006611.8"/>
</dbReference>
<dbReference type="GeneID" id="311111"/>
<dbReference type="KEGG" id="rno:311111"/>
<dbReference type="UCSC" id="RGD:727920">
    <property type="organism name" value="rat"/>
</dbReference>
<dbReference type="AGR" id="RGD:727920"/>
<dbReference type="CTD" id="115677"/>
<dbReference type="RGD" id="727920">
    <property type="gene designation" value="Nostrin"/>
</dbReference>
<dbReference type="eggNOG" id="KOG4429">
    <property type="taxonomic scope" value="Eukaryota"/>
</dbReference>
<dbReference type="GeneTree" id="ENSGT00510000048120"/>
<dbReference type="HOGENOM" id="CLU_027170_1_0_1"/>
<dbReference type="InParanoid" id="Q5I0D6"/>
<dbReference type="OrthoDB" id="66799at9989"/>
<dbReference type="PhylomeDB" id="Q5I0D6"/>
<dbReference type="Reactome" id="R-RNO-203641">
    <property type="pathway name" value="NOSTRIN mediated eNOS trafficking"/>
</dbReference>
<dbReference type="PRO" id="PR:Q5I0D6"/>
<dbReference type="Proteomes" id="UP000002494">
    <property type="component" value="Chromosome 3"/>
</dbReference>
<dbReference type="Bgee" id="ENSRNOG00000006611">
    <property type="expression patterns" value="Expressed in lung and 18 other cell types or tissues"/>
</dbReference>
<dbReference type="GO" id="GO:0031410">
    <property type="term" value="C:cytoplasmic vesicle"/>
    <property type="evidence" value="ECO:0007669"/>
    <property type="project" value="UniProtKB-KW"/>
</dbReference>
<dbReference type="GO" id="GO:0005856">
    <property type="term" value="C:cytoskeleton"/>
    <property type="evidence" value="ECO:0007669"/>
    <property type="project" value="UniProtKB-SubCell"/>
</dbReference>
<dbReference type="GO" id="GO:0005634">
    <property type="term" value="C:nucleus"/>
    <property type="evidence" value="ECO:0000266"/>
    <property type="project" value="RGD"/>
</dbReference>
<dbReference type="GO" id="GO:0005886">
    <property type="term" value="C:plasma membrane"/>
    <property type="evidence" value="ECO:0007669"/>
    <property type="project" value="UniProtKB-SubCell"/>
</dbReference>
<dbReference type="GO" id="GO:0003677">
    <property type="term" value="F:DNA binding"/>
    <property type="evidence" value="ECO:0000266"/>
    <property type="project" value="RGD"/>
</dbReference>
<dbReference type="GO" id="GO:0006897">
    <property type="term" value="P:endocytosis"/>
    <property type="evidence" value="ECO:0007669"/>
    <property type="project" value="UniProtKB-KW"/>
</dbReference>
<dbReference type="GO" id="GO:0045892">
    <property type="term" value="P:negative regulation of DNA-templated transcription"/>
    <property type="evidence" value="ECO:0000266"/>
    <property type="project" value="RGD"/>
</dbReference>
<dbReference type="GO" id="GO:0007165">
    <property type="term" value="P:signal transduction"/>
    <property type="evidence" value="ECO:0007669"/>
    <property type="project" value="InterPro"/>
</dbReference>
<dbReference type="CDD" id="cd11823">
    <property type="entry name" value="SH3_Nostrin"/>
    <property type="match status" value="1"/>
</dbReference>
<dbReference type="FunFam" id="2.30.30.40:FF:000186">
    <property type="entry name" value="Nitric oxide synthase trafficking"/>
    <property type="match status" value="1"/>
</dbReference>
<dbReference type="FunFam" id="1.20.1270.60:FF:000067">
    <property type="entry name" value="NOSTRIN isoform 1"/>
    <property type="match status" value="1"/>
</dbReference>
<dbReference type="Gene3D" id="6.10.140.470">
    <property type="match status" value="1"/>
</dbReference>
<dbReference type="Gene3D" id="1.20.1270.60">
    <property type="entry name" value="Arfaptin homology (AH) domain/BAR domain"/>
    <property type="match status" value="1"/>
</dbReference>
<dbReference type="Gene3D" id="2.30.30.40">
    <property type="entry name" value="SH3 Domains"/>
    <property type="match status" value="1"/>
</dbReference>
<dbReference type="InterPro" id="IPR027267">
    <property type="entry name" value="AH/BAR_dom_sf"/>
</dbReference>
<dbReference type="InterPro" id="IPR031160">
    <property type="entry name" value="F_BAR"/>
</dbReference>
<dbReference type="InterPro" id="IPR001060">
    <property type="entry name" value="FCH_dom"/>
</dbReference>
<dbReference type="InterPro" id="IPR011072">
    <property type="entry name" value="HR1_rho-bd"/>
</dbReference>
<dbReference type="InterPro" id="IPR035656">
    <property type="entry name" value="Nostrin_SH3"/>
</dbReference>
<dbReference type="InterPro" id="IPR036028">
    <property type="entry name" value="SH3-like_dom_sf"/>
</dbReference>
<dbReference type="InterPro" id="IPR001452">
    <property type="entry name" value="SH3_domain"/>
</dbReference>
<dbReference type="PANTHER" id="PTHR23065:SF7">
    <property type="entry name" value="NOSTRIN, ISOFORM H"/>
    <property type="match status" value="1"/>
</dbReference>
<dbReference type="PANTHER" id="PTHR23065">
    <property type="entry name" value="PROLINE-SERINE-THREONINE PHOSPHATASE INTERACTING PROTEIN 1"/>
    <property type="match status" value="1"/>
</dbReference>
<dbReference type="Pfam" id="PF00611">
    <property type="entry name" value="FCH"/>
    <property type="match status" value="1"/>
</dbReference>
<dbReference type="Pfam" id="PF14604">
    <property type="entry name" value="SH3_9"/>
    <property type="match status" value="1"/>
</dbReference>
<dbReference type="PRINTS" id="PR00452">
    <property type="entry name" value="SH3DOMAIN"/>
</dbReference>
<dbReference type="PRINTS" id="PR01887">
    <property type="entry name" value="SPECTRNALPHA"/>
</dbReference>
<dbReference type="SMART" id="SM00055">
    <property type="entry name" value="FCH"/>
    <property type="match status" value="1"/>
</dbReference>
<dbReference type="SMART" id="SM00326">
    <property type="entry name" value="SH3"/>
    <property type="match status" value="1"/>
</dbReference>
<dbReference type="SUPFAM" id="SSF103657">
    <property type="entry name" value="BAR/IMD domain-like"/>
    <property type="match status" value="1"/>
</dbReference>
<dbReference type="SUPFAM" id="SSF50044">
    <property type="entry name" value="SH3-domain"/>
    <property type="match status" value="1"/>
</dbReference>
<dbReference type="PROSITE" id="PS51741">
    <property type="entry name" value="F_BAR"/>
    <property type="match status" value="1"/>
</dbReference>
<dbReference type="PROSITE" id="PS51860">
    <property type="entry name" value="REM_1"/>
    <property type="match status" value="1"/>
</dbReference>
<dbReference type="PROSITE" id="PS50002">
    <property type="entry name" value="SH3"/>
    <property type="match status" value="1"/>
</dbReference>
<feature type="chain" id="PRO_0000289091" description="Nostrin">
    <location>
        <begin position="1"/>
        <end position="502"/>
    </location>
</feature>
<feature type="domain" description="F-BAR" evidence="6">
    <location>
        <begin position="1"/>
        <end position="260"/>
    </location>
</feature>
<feature type="domain" description="REM-1" evidence="7">
    <location>
        <begin position="292"/>
        <end position="372"/>
    </location>
</feature>
<feature type="domain" description="SH3" evidence="5">
    <location>
        <begin position="438"/>
        <end position="497"/>
    </location>
</feature>
<feature type="region of interest" description="Disordered" evidence="8">
    <location>
        <begin position="413"/>
        <end position="437"/>
    </location>
</feature>
<feature type="coiled-coil region" evidence="4">
    <location>
        <begin position="160"/>
        <end position="230"/>
    </location>
</feature>
<feature type="coiled-coil region" evidence="4">
    <location>
        <begin position="305"/>
        <end position="335"/>
    </location>
</feature>
<feature type="compositionally biased region" description="Low complexity" evidence="8">
    <location>
        <begin position="423"/>
        <end position="437"/>
    </location>
</feature>
<feature type="modified residue" description="Phosphoserine" evidence="13">
    <location>
        <position position="114"/>
    </location>
</feature>
<feature type="modified residue" description="Phosphoserine" evidence="2">
    <location>
        <position position="479"/>
    </location>
</feature>
<protein>
    <recommendedName>
        <fullName evidence="11">Nostrin</fullName>
    </recommendedName>
    <alternativeName>
        <fullName>BM247</fullName>
    </alternativeName>
    <alternativeName>
        <fullName>Nitric oxide synthase trafficker</fullName>
    </alternativeName>
    <alternativeName>
        <fullName>eNOS-trafficking inducer</fullName>
    </alternativeName>
</protein>
<sequence>MRDPLTDCSYNKVYKSLKEFAQNGDNFCKQITSVLQQRANLEISYAKGLQKLAVKLSKALQSTKKNCLSTAWAWASESMKSAADLHQKLGKAIELEAIKPTHQVLSMQEKKRKSLDNEVEKSANLVINNWNQQIKAKKKLMMSTKKHEALFHLIESSKQSMTQKEKQKLLNKLKKSTEKLEKEDESYYQKNMAGYSTRLKWESTLEKCYKSMLELEKERIQLLCNNLNQYSQHISLFGQTLTTCHTQIHCAISKVDVEKDIQALMEETAVLSLENKSELLLADYFEEDPKNPMDKERRKSLIKPKLWRLQKDIEKASRDKEGLEQKLKALASSASFSDAKSQKDAETLMDENSLKLDLLQANSYKLSTVLADLEQRPKPCHPCSNCIFKWKEKEHSHSYVKISRPLLTKRLEKAESKAPAGEQNNPSSSRPGSSVSQGNNQLCKALYTFQARQDDELNLEKGDIVTIHEKKEEGWWFGSLNGKKGHFPAAYVEELPPKAGQA</sequence>
<reference key="1">
    <citation type="journal article" date="2004" name="Genome Res.">
        <title>The status, quality, and expansion of the NIH full-length cDNA project: the Mammalian Gene Collection (MGC).</title>
        <authorList>
            <consortium name="The MGC Project Team"/>
        </authorList>
    </citation>
    <scope>NUCLEOTIDE SEQUENCE [LARGE SCALE MRNA]</scope>
    <source>
        <tissue>Kidney</tissue>
    </source>
</reference>
<reference key="2">
    <citation type="journal article" date="2001" name="Brain Res.">
        <title>Altered gene expression in cerebral capillaries of stroke-prone spontaneously hypertensive rats.</title>
        <authorList>
            <person name="Kirsch T."/>
            <person name="Wellner M."/>
            <person name="Luft F.C."/>
            <person name="Haller H."/>
            <person name="Lippoldt A."/>
        </authorList>
    </citation>
    <scope>NUCLEOTIDE SEQUENCE [MRNA] OF 11-143</scope>
    <scope>TISSUE SPECIFICITY</scope>
    <source>
        <strain>SHRSP</strain>
    </source>
</reference>
<reference key="3">
    <citation type="journal article" date="2005" name="J. Cell Sci.">
        <title>NOSTRIN functions as a homotrimeric adaptor protein facilitating internalization of eNOS.</title>
        <authorList>
            <person name="Icking A."/>
            <person name="Matt S."/>
            <person name="Opitz N."/>
            <person name="Wiesenthal A."/>
            <person name="Mueller-Esterl W."/>
            <person name="Schilling K."/>
        </authorList>
    </citation>
    <scope>INTERACTION WITH DNM2</scope>
</reference>
<reference key="4">
    <citation type="journal article" date="2012" name="Nat. Commun.">
        <title>Quantitative maps of protein phosphorylation sites across 14 different rat organs and tissues.</title>
        <authorList>
            <person name="Lundby A."/>
            <person name="Secher A."/>
            <person name="Lage K."/>
            <person name="Nordsborg N.B."/>
            <person name="Dmytriyev A."/>
            <person name="Lundby C."/>
            <person name="Olsen J.V."/>
        </authorList>
    </citation>
    <scope>PHOSPHORYLATION [LARGE SCALE ANALYSIS] AT SER-114</scope>
    <scope>IDENTIFICATION BY MASS SPECTROMETRY [LARGE SCALE ANALYSIS]</scope>
</reference>
<organism>
    <name type="scientific">Rattus norvegicus</name>
    <name type="common">Rat</name>
    <dbReference type="NCBI Taxonomy" id="10116"/>
    <lineage>
        <taxon>Eukaryota</taxon>
        <taxon>Metazoa</taxon>
        <taxon>Chordata</taxon>
        <taxon>Craniata</taxon>
        <taxon>Vertebrata</taxon>
        <taxon>Euteleostomi</taxon>
        <taxon>Mammalia</taxon>
        <taxon>Eutheria</taxon>
        <taxon>Euarchontoglires</taxon>
        <taxon>Glires</taxon>
        <taxon>Rodentia</taxon>
        <taxon>Myomorpha</taxon>
        <taxon>Muroidea</taxon>
        <taxon>Muridae</taxon>
        <taxon>Murinae</taxon>
        <taxon>Rattus</taxon>
    </lineage>
</organism>
<keyword id="KW-1003">Cell membrane</keyword>
<keyword id="KW-0175">Coiled coil</keyword>
<keyword id="KW-0963">Cytoplasm</keyword>
<keyword id="KW-0968">Cytoplasmic vesicle</keyword>
<keyword id="KW-0206">Cytoskeleton</keyword>
<keyword id="KW-0254">Endocytosis</keyword>
<keyword id="KW-0472">Membrane</keyword>
<keyword id="KW-0539">Nucleus</keyword>
<keyword id="KW-0597">Phosphoprotein</keyword>
<keyword id="KW-1185">Reference proteome</keyword>
<keyword id="KW-0728">SH3 domain</keyword>
<evidence type="ECO:0000250" key="1"/>
<evidence type="ECO:0000250" key="2">
    <source>
        <dbReference type="UniProtKB" id="Q6WKZ7"/>
    </source>
</evidence>
<evidence type="ECO:0000250" key="3">
    <source>
        <dbReference type="UniProtKB" id="Q8IVI9"/>
    </source>
</evidence>
<evidence type="ECO:0000255" key="4"/>
<evidence type="ECO:0000255" key="5">
    <source>
        <dbReference type="PROSITE-ProRule" id="PRU00192"/>
    </source>
</evidence>
<evidence type="ECO:0000255" key="6">
    <source>
        <dbReference type="PROSITE-ProRule" id="PRU01077"/>
    </source>
</evidence>
<evidence type="ECO:0000255" key="7">
    <source>
        <dbReference type="PROSITE-ProRule" id="PRU01207"/>
    </source>
</evidence>
<evidence type="ECO:0000256" key="8">
    <source>
        <dbReference type="SAM" id="MobiDB-lite"/>
    </source>
</evidence>
<evidence type="ECO:0000269" key="9">
    <source>
    </source>
</evidence>
<evidence type="ECO:0000269" key="10">
    <source>
    </source>
</evidence>
<evidence type="ECO:0000305" key="11"/>
<evidence type="ECO:0000312" key="12">
    <source>
        <dbReference type="RGD" id="727920"/>
    </source>
</evidence>
<evidence type="ECO:0007744" key="13">
    <source>
    </source>
</evidence>
<accession>Q5I0D6</accession>
<accession>Q923J7</accession>
<name>NOSTN_RAT</name>